<reference key="1">
    <citation type="submission" date="1996-10" db="EMBL/GenBank/DDBJ databases">
        <title>An EMB-5 homolog of Caenorhabditis briggsae is essentially identical to EMB-5 of Caenorhabditis elegans.</title>
        <authorList>
            <person name="Higashi K."/>
            <person name="Sano T."/>
            <person name="Miwa J."/>
        </authorList>
    </citation>
    <scope>NUCLEOTIDE SEQUENCE [MRNA]</scope>
</reference>
<reference key="2">
    <citation type="journal article" date="2003" name="PLoS Biol.">
        <title>The genome sequence of Caenorhabditis briggsae: a platform for comparative genomics.</title>
        <authorList>
            <person name="Stein L.D."/>
            <person name="Bao Z."/>
            <person name="Blasiar D."/>
            <person name="Blumenthal T."/>
            <person name="Brent M.R."/>
            <person name="Chen N."/>
            <person name="Chinwalla A."/>
            <person name="Clarke L."/>
            <person name="Clee C."/>
            <person name="Coghlan A."/>
            <person name="Coulson A."/>
            <person name="D'Eustachio P."/>
            <person name="Fitch D.H.A."/>
            <person name="Fulton L.A."/>
            <person name="Fulton R.E."/>
            <person name="Griffiths-Jones S."/>
            <person name="Harris T.W."/>
            <person name="Hillier L.W."/>
            <person name="Kamath R."/>
            <person name="Kuwabara P.E."/>
            <person name="Mardis E.R."/>
            <person name="Marra M.A."/>
            <person name="Miner T.L."/>
            <person name="Minx P."/>
            <person name="Mullikin J.C."/>
            <person name="Plumb R.W."/>
            <person name="Rogers J."/>
            <person name="Schein J.E."/>
            <person name="Sohrmann M."/>
            <person name="Spieth J."/>
            <person name="Stajich J.E."/>
            <person name="Wei C."/>
            <person name="Willey D."/>
            <person name="Wilson R.K."/>
            <person name="Durbin R.M."/>
            <person name="Waterston R.H."/>
        </authorList>
    </citation>
    <scope>NUCLEOTIDE SEQUENCE [LARGE SCALE GENOMIC DNA]</scope>
    <source>
        <strain>AF16</strain>
    </source>
</reference>
<feature type="chain" id="PRO_0000072168" description="Suppressor of Ty 6 homolog">
    <location>
        <begin position="1"/>
        <end position="1521"/>
    </location>
</feature>
<feature type="domain" description="S1 motif" evidence="5">
    <location>
        <begin position="1182"/>
        <end position="1251"/>
    </location>
</feature>
<feature type="domain" description="SH2">
    <location>
        <begin position="1299"/>
        <end position="1388"/>
    </location>
</feature>
<feature type="region of interest" description="Disordered" evidence="6">
    <location>
        <begin position="1"/>
        <end position="204"/>
    </location>
</feature>
<feature type="region of interest" description="Disordered" evidence="6">
    <location>
        <begin position="1490"/>
        <end position="1521"/>
    </location>
</feature>
<feature type="short sequence motif" description="Nuclear localization signal" evidence="4">
    <location>
        <begin position="26"/>
        <end position="42"/>
    </location>
</feature>
<feature type="compositionally biased region" description="Basic residues" evidence="6">
    <location>
        <begin position="26"/>
        <end position="41"/>
    </location>
</feature>
<feature type="compositionally biased region" description="Acidic residues" evidence="6">
    <location>
        <begin position="45"/>
        <end position="56"/>
    </location>
</feature>
<feature type="compositionally biased region" description="Acidic residues" evidence="6">
    <location>
        <begin position="67"/>
        <end position="76"/>
    </location>
</feature>
<feature type="compositionally biased region" description="Basic and acidic residues" evidence="6">
    <location>
        <begin position="77"/>
        <end position="89"/>
    </location>
</feature>
<feature type="compositionally biased region" description="Acidic residues" evidence="6">
    <location>
        <begin position="90"/>
        <end position="103"/>
    </location>
</feature>
<feature type="compositionally biased region" description="Basic and acidic residues" evidence="6">
    <location>
        <begin position="127"/>
        <end position="149"/>
    </location>
</feature>
<feature type="compositionally biased region" description="Acidic residues" evidence="6">
    <location>
        <begin position="167"/>
        <end position="177"/>
    </location>
</feature>
<feature type="compositionally biased region" description="Pro residues" evidence="6">
    <location>
        <begin position="1504"/>
        <end position="1513"/>
    </location>
</feature>
<feature type="sequence conflict" description="In Ref. 2; CAP35530." evidence="7" ref="2">
    <original>G</original>
    <variation>D</variation>
    <location>
        <position position="16"/>
    </location>
</feature>
<feature type="sequence conflict" description="In Ref. 1; BAA13699." evidence="7" ref="1">
    <original>R</original>
    <variation>P</variation>
    <location>
        <position position="267"/>
    </location>
</feature>
<feature type="sequence conflict" description="In Ref. 1; BAA13699." evidence="7" ref="1">
    <original>A</original>
    <variation>G</variation>
    <location>
        <position position="564"/>
    </location>
</feature>
<feature type="sequence conflict" description="In Ref. 1; BAA13699." evidence="7" ref="1">
    <original>R</original>
    <variation>G</variation>
    <location>
        <position position="680"/>
    </location>
</feature>
<proteinExistence type="evidence at transcript level"/>
<sequence length="1521" mass="176036">MDFIDNQAEESDASTGRSDDDEPQSKKMKMAKDKLKKKKKVVASSDEDEDDEDDEEEGRKEMQGFIADEDDEEEDARSEKSDRSRRSEINDELDDEDLDLIDENLDRQGERKKNRVRLGDSSDEDEPIRRSNQDDDDLQSERGSDDGDKRRGHGGRGGGGYDSDSDRSEDDFIEDDGDAPRRHRKRHRGDEHIPEGAEDDARDVFGVEDFNFDEFYDDDDGEEGLEDEEEEIIEDDGEGGEIKIRRKRDTTKKTTLLESIEPSELERGFLSAADKKIMIEDAPERFQLRRTPVTEADDDELEREAQWIMKFAFEETTVTNQAAVDADGKLECLMNIDSSEIEDKRRAVVNAIKAVLHFIRVRSNSFEVPFIGFYRKESIDNLLTMNNLWIVYDYDEKYCHLSEKKRRLYDLMRRMREYQELSDDITAKRRPINEMDLIDINFAETLEQLTDIHANFQLLYGSLLEDMTKWEKERRAADGEETEYRAKFKSSIRNDKYQMCVENGIGELAGRFGLTAKQFAENLDWRKHDIDQDSAFPLEAAEEYICPAFIDRETVLNGAKFMLAKEISRQPLVRSRVRQEFRDNAHFWVKPTKKGRDTIDETHPLFNKRYIKNKPIRNLTDEEFLYYHKAKQDGLIDMVLMYESDEDQAANQFLVKKFLSDSIFRKDEYTDNVEQWNAVRDQCVNMAITEMLVPYMKEEVYNTILEEAKMAVAKKCKKEFASRIARSGYVPEKEKLDEEDEEHSARRRMMAICYSPVRDEASFGVMVDENGAIVDYLRMVHFTKRGHGGGNTGALKEESMELFKKFVQRRRPHAIALNIEDMECTRLKRDLEEAVAELYSQSKIFSQINVYLMDNELAKVYMRSNISIAENPDHPPTLRQAVSLARQLLDPIPEYAHLWNSDEDIFCLSLHPLQRDIDQEILAQLLNHELVNRVNEEGVDINKCAEFPHYTNMLQFTCGLGPRKATSLLKSIKANDNLIESRSKLVVGCKLGPKVFMNCAGFIRIDTRRVSDKTDAYVEVLDGSRVHPETYEWARKMAVDALEVDDSADPTAALQEIMETPERLRDLDLDAFADELNRQGFGEKKATLYDISSELSERYKDLRAPFVEPSGEALYDLLTRSGKEVKVGCKMLGTVQSVQYRKVERDTIDSMIPEHTEEDQYICPSCKIFTAADPQSVREHLLNAGRPGGCVGSACGIRVRLDNGMTAFCPNKFISSSHVDNPLTRVKLNQPYWFKVMAINKEKFSILLSCKSSDLKEDAPAERDDFWDQQQYDDDVAAMKKETTKKKDADTRVKRVIAHPNFHNVSYEAATKMLDEMDWSDCIIRPSANKESGLSVTWKICDRIYHNFFVKESAKDQVFSIGRTLSVGGEDFEDLDELIARFVLPMIQISHEITTHKYFFTQGTSEDTDQVETFVHEKRRELGRSPYVFSASYRQPCQFCISYMFDNSNRIRHEHFKISPRGIRFRQQNFDSLDRMMAWFKRHFNEPPPGIRSSLSYRPTGRTGPPPSAPYQQPPQQQYYR</sequence>
<organism>
    <name type="scientific">Caenorhabditis briggsae</name>
    <dbReference type="NCBI Taxonomy" id="6238"/>
    <lineage>
        <taxon>Eukaryota</taxon>
        <taxon>Metazoa</taxon>
        <taxon>Ecdysozoa</taxon>
        <taxon>Nematoda</taxon>
        <taxon>Chromadorea</taxon>
        <taxon>Rhabditida</taxon>
        <taxon>Rhabditina</taxon>
        <taxon>Rhabditomorpha</taxon>
        <taxon>Rhabditoidea</taxon>
        <taxon>Rhabditidae</taxon>
        <taxon>Peloderinae</taxon>
        <taxon>Caenorhabditis</taxon>
    </lineage>
</organism>
<dbReference type="EMBL" id="D88767">
    <property type="protein sequence ID" value="BAA13699.1"/>
    <property type="molecule type" value="mRNA"/>
</dbReference>
<dbReference type="EMBL" id="HE600963">
    <property type="protein sequence ID" value="CAP35530.1"/>
    <property type="molecule type" value="Genomic_DNA"/>
</dbReference>
<dbReference type="SMR" id="Q93148"/>
<dbReference type="FunCoup" id="Q93148">
    <property type="interactions" value="3203"/>
</dbReference>
<dbReference type="STRING" id="6238.Q93148"/>
<dbReference type="KEGG" id="cbr:CBG_18001"/>
<dbReference type="CTD" id="8584057"/>
<dbReference type="WormBase" id="CBG18001">
    <property type="protein sequence ID" value="CBP10840"/>
    <property type="gene ID" value="WBGene00037500"/>
    <property type="gene designation" value="Cbr-emb-5"/>
</dbReference>
<dbReference type="eggNOG" id="KOG1856">
    <property type="taxonomic scope" value="Eukaryota"/>
</dbReference>
<dbReference type="HOGENOM" id="CLU_001680_4_0_1"/>
<dbReference type="InParanoid" id="Q93148"/>
<dbReference type="Proteomes" id="UP000008549">
    <property type="component" value="Unassembled WGS sequence"/>
</dbReference>
<dbReference type="GO" id="GO:0008023">
    <property type="term" value="C:transcription elongation factor complex"/>
    <property type="evidence" value="ECO:0000318"/>
    <property type="project" value="GO_Central"/>
</dbReference>
<dbReference type="GO" id="GO:0003677">
    <property type="term" value="F:DNA binding"/>
    <property type="evidence" value="ECO:0007669"/>
    <property type="project" value="InterPro"/>
</dbReference>
<dbReference type="GO" id="GO:0042393">
    <property type="term" value="F:histone binding"/>
    <property type="evidence" value="ECO:0000318"/>
    <property type="project" value="GO_Central"/>
</dbReference>
<dbReference type="GO" id="GO:0031491">
    <property type="term" value="F:nucleosome binding"/>
    <property type="evidence" value="ECO:0000318"/>
    <property type="project" value="GO_Central"/>
</dbReference>
<dbReference type="GO" id="GO:0034728">
    <property type="term" value="P:nucleosome organization"/>
    <property type="evidence" value="ECO:0000318"/>
    <property type="project" value="GO_Central"/>
</dbReference>
<dbReference type="GO" id="GO:0006368">
    <property type="term" value="P:transcription elongation by RNA polymerase II"/>
    <property type="evidence" value="ECO:0000318"/>
    <property type="project" value="GO_Central"/>
</dbReference>
<dbReference type="GO" id="GO:0140673">
    <property type="term" value="P:transcription elongation-coupled chromatin remodeling"/>
    <property type="evidence" value="ECO:0007669"/>
    <property type="project" value="InterPro"/>
</dbReference>
<dbReference type="CDD" id="cd09928">
    <property type="entry name" value="SH2_Cterm_SPT6_like"/>
    <property type="match status" value="1"/>
</dbReference>
<dbReference type="CDD" id="cd09918">
    <property type="entry name" value="SH2_Nterm_SPT6_like"/>
    <property type="match status" value="1"/>
</dbReference>
<dbReference type="FunFam" id="2.40.50.140:FF:000494">
    <property type="entry name" value="Suppressor of Ty 6 homolog"/>
    <property type="match status" value="1"/>
</dbReference>
<dbReference type="FunFam" id="3.30.420.140:FF:000028">
    <property type="entry name" value="Suppressor of Ty 6 homolog"/>
    <property type="match status" value="1"/>
</dbReference>
<dbReference type="FunFam" id="1.10.10.2740:FF:000002">
    <property type="entry name" value="Transcription elongation factor Spt6"/>
    <property type="match status" value="1"/>
</dbReference>
<dbReference type="FunFam" id="1.10.10.650:FF:000002">
    <property type="entry name" value="Transcription elongation factor spt6"/>
    <property type="match status" value="1"/>
</dbReference>
<dbReference type="FunFam" id="1.10.150.850:FF:000001">
    <property type="entry name" value="Transcription elongation factor spt6"/>
    <property type="match status" value="1"/>
</dbReference>
<dbReference type="FunFam" id="1.10.3500.10:FF:000006">
    <property type="entry name" value="Transcription elongation factor spt6"/>
    <property type="match status" value="1"/>
</dbReference>
<dbReference type="FunFam" id="3.30.505.10:FF:000030">
    <property type="entry name" value="Transcription elongation factor spt6"/>
    <property type="match status" value="1"/>
</dbReference>
<dbReference type="Gene3D" id="2.40.50.140">
    <property type="entry name" value="Nucleic acid-binding proteins"/>
    <property type="match status" value="1"/>
</dbReference>
<dbReference type="Gene3D" id="1.10.10.650">
    <property type="entry name" value="RuvA domain 2-like"/>
    <property type="match status" value="1"/>
</dbReference>
<dbReference type="Gene3D" id="3.30.505.10">
    <property type="entry name" value="SH2 domain"/>
    <property type="match status" value="2"/>
</dbReference>
<dbReference type="Gene3D" id="1.10.10.2740">
    <property type="entry name" value="Spt6, Death-like domain"/>
    <property type="match status" value="1"/>
</dbReference>
<dbReference type="Gene3D" id="1.10.150.850">
    <property type="entry name" value="Spt6, helix-hairpin-helix domain"/>
    <property type="match status" value="1"/>
</dbReference>
<dbReference type="Gene3D" id="1.10.3500.10">
    <property type="entry name" value="Tex N-terminal region-like"/>
    <property type="match status" value="1"/>
</dbReference>
<dbReference type="Gene3D" id="3.30.420.140">
    <property type="entry name" value="YqgF/RNase H-like domain"/>
    <property type="match status" value="1"/>
</dbReference>
<dbReference type="InterPro" id="IPR041692">
    <property type="entry name" value="HHH_9"/>
</dbReference>
<dbReference type="InterPro" id="IPR012340">
    <property type="entry name" value="NA-bd_OB-fold"/>
</dbReference>
<dbReference type="InterPro" id="IPR012337">
    <property type="entry name" value="RNaseH-like_sf"/>
</dbReference>
<dbReference type="InterPro" id="IPR010994">
    <property type="entry name" value="RuvA_2-like"/>
</dbReference>
<dbReference type="InterPro" id="IPR003029">
    <property type="entry name" value="S1_domain"/>
</dbReference>
<dbReference type="InterPro" id="IPR000980">
    <property type="entry name" value="SH2"/>
</dbReference>
<dbReference type="InterPro" id="IPR036860">
    <property type="entry name" value="SH2_dom_sf"/>
</dbReference>
<dbReference type="InterPro" id="IPR028083">
    <property type="entry name" value="Spt6_acidic_N_dom"/>
</dbReference>
<dbReference type="InterPro" id="IPR042066">
    <property type="entry name" value="Spt6_death-like"/>
</dbReference>
<dbReference type="InterPro" id="IPR032706">
    <property type="entry name" value="Spt6_HHH"/>
</dbReference>
<dbReference type="InterPro" id="IPR028088">
    <property type="entry name" value="Spt6_HTH_DNA-bd_dom"/>
</dbReference>
<dbReference type="InterPro" id="IPR035420">
    <property type="entry name" value="Spt6_SH2"/>
</dbReference>
<dbReference type="InterPro" id="IPR035018">
    <property type="entry name" value="Spt6_SH2_C"/>
</dbReference>
<dbReference type="InterPro" id="IPR035019">
    <property type="entry name" value="Spt6_SH2_N"/>
</dbReference>
<dbReference type="InterPro" id="IPR028231">
    <property type="entry name" value="Spt6_YqgF"/>
</dbReference>
<dbReference type="InterPro" id="IPR055179">
    <property type="entry name" value="Tex-like_central_region"/>
</dbReference>
<dbReference type="InterPro" id="IPR023323">
    <property type="entry name" value="Tex-like_dom_sf"/>
</dbReference>
<dbReference type="InterPro" id="IPR023319">
    <property type="entry name" value="Tex-like_HTH_dom_sf"/>
</dbReference>
<dbReference type="InterPro" id="IPR017072">
    <property type="entry name" value="TF_Spt6"/>
</dbReference>
<dbReference type="InterPro" id="IPR006641">
    <property type="entry name" value="YqgF/RNaseH-like_dom"/>
</dbReference>
<dbReference type="InterPro" id="IPR037027">
    <property type="entry name" value="YqgF/RNaseH-like_dom_sf"/>
</dbReference>
<dbReference type="PANTHER" id="PTHR10145">
    <property type="entry name" value="TRANSCRIPTION ELONGATION FACTOR SPT6"/>
    <property type="match status" value="1"/>
</dbReference>
<dbReference type="PANTHER" id="PTHR10145:SF6">
    <property type="entry name" value="TRANSCRIPTION ELONGATION FACTOR SPT6"/>
    <property type="match status" value="1"/>
</dbReference>
<dbReference type="Pfam" id="PF14635">
    <property type="entry name" value="HHH_7"/>
    <property type="match status" value="1"/>
</dbReference>
<dbReference type="Pfam" id="PF17674">
    <property type="entry name" value="HHH_9"/>
    <property type="match status" value="1"/>
</dbReference>
<dbReference type="Pfam" id="PF14641">
    <property type="entry name" value="HTH_44"/>
    <property type="match status" value="1"/>
</dbReference>
<dbReference type="Pfam" id="PF00575">
    <property type="entry name" value="S1"/>
    <property type="match status" value="1"/>
</dbReference>
<dbReference type="Pfam" id="PF14633">
    <property type="entry name" value="SH2_2"/>
    <property type="match status" value="1"/>
</dbReference>
<dbReference type="Pfam" id="PF14632">
    <property type="entry name" value="SPT6_acidic"/>
    <property type="match status" value="1"/>
</dbReference>
<dbReference type="Pfam" id="PF22706">
    <property type="entry name" value="Tex_central_region"/>
    <property type="match status" value="1"/>
</dbReference>
<dbReference type="Pfam" id="PF14639">
    <property type="entry name" value="YqgF"/>
    <property type="match status" value="1"/>
</dbReference>
<dbReference type="PIRSF" id="PIRSF036947">
    <property type="entry name" value="Spt6"/>
    <property type="match status" value="1"/>
</dbReference>
<dbReference type="SMART" id="SM00252">
    <property type="entry name" value="SH2"/>
    <property type="match status" value="1"/>
</dbReference>
<dbReference type="SMART" id="SM00732">
    <property type="entry name" value="YqgFc"/>
    <property type="match status" value="1"/>
</dbReference>
<dbReference type="SUPFAM" id="SSF50249">
    <property type="entry name" value="Nucleic acid-binding proteins"/>
    <property type="match status" value="1"/>
</dbReference>
<dbReference type="SUPFAM" id="SSF53098">
    <property type="entry name" value="Ribonuclease H-like"/>
    <property type="match status" value="1"/>
</dbReference>
<dbReference type="SUPFAM" id="SSF47781">
    <property type="entry name" value="RuvA domain 2-like"/>
    <property type="match status" value="2"/>
</dbReference>
<dbReference type="SUPFAM" id="SSF55550">
    <property type="entry name" value="SH2 domain"/>
    <property type="match status" value="1"/>
</dbReference>
<dbReference type="SUPFAM" id="SSF158832">
    <property type="entry name" value="Tex N-terminal region-like"/>
    <property type="match status" value="1"/>
</dbReference>
<dbReference type="PROSITE" id="PS50126">
    <property type="entry name" value="S1"/>
    <property type="match status" value="1"/>
</dbReference>
<name>SPT6H_CAEBR</name>
<protein>
    <recommendedName>
        <fullName>Suppressor of Ty 6 homolog</fullName>
    </recommendedName>
    <alternativeName>
        <fullName>Abnormal embryogenesis protein 5</fullName>
    </alternativeName>
</protein>
<accession>Q93148</accession>
<accession>A8XSS8</accession>
<accession>Q60Z16</accession>
<comment type="function">
    <text evidence="2 3">Histone H3-H4 chaperone that plays a role in maintenance of chromatin structure during RNA polymerase II transcription elongation (By similarity). May be required for several aspects of morphogenesis of C.briggsae, including regulation of division in the germline and gut and specification of ventral-uterine precursor cell fate (By similarity).</text>
</comment>
<comment type="subunit">
    <text evidence="1">Interacts with glp-1 and lin-12.</text>
</comment>
<comment type="subcellular location">
    <subcellularLocation>
        <location evidence="7">Nucleus</location>
    </subcellularLocation>
</comment>
<comment type="similarity">
    <text evidence="7">Belongs to the SPT6 family.</text>
</comment>
<gene>
    <name type="primary">emb-5</name>
    <name type="ORF">CBG18001</name>
</gene>
<evidence type="ECO:0000250" key="1"/>
<evidence type="ECO:0000250" key="2">
    <source>
        <dbReference type="UniProtKB" id="P23615"/>
    </source>
</evidence>
<evidence type="ECO:0000250" key="3">
    <source>
        <dbReference type="UniProtKB" id="P34703"/>
    </source>
</evidence>
<evidence type="ECO:0000255" key="4"/>
<evidence type="ECO:0000255" key="5">
    <source>
        <dbReference type="PROSITE-ProRule" id="PRU00180"/>
    </source>
</evidence>
<evidence type="ECO:0000256" key="6">
    <source>
        <dbReference type="SAM" id="MobiDB-lite"/>
    </source>
</evidence>
<evidence type="ECO:0000305" key="7"/>
<keyword id="KW-0539">Nucleus</keyword>
<keyword id="KW-1185">Reference proteome</keyword>
<keyword id="KW-0804">Transcription</keyword>